<protein>
    <recommendedName>
        <fullName evidence="1">dCTP deaminase, dUMP-forming</fullName>
        <ecNumber evidence="1">3.5.4.30</ecNumber>
    </recommendedName>
    <alternativeName>
        <fullName evidence="1">Bifunctional dCTP deaminase:dUTPase</fullName>
    </alternativeName>
    <alternativeName>
        <fullName evidence="1">DCD-DUT</fullName>
    </alternativeName>
</protein>
<feature type="chain" id="PRO_0000155996" description="dCTP deaminase, dUMP-forming">
    <location>
        <begin position="1"/>
        <end position="190"/>
    </location>
</feature>
<feature type="region of interest" description="Disordered" evidence="2">
    <location>
        <begin position="162"/>
        <end position="190"/>
    </location>
</feature>
<feature type="compositionally biased region" description="Polar residues" evidence="2">
    <location>
        <begin position="166"/>
        <end position="190"/>
    </location>
</feature>
<feature type="active site" description="Proton donor/acceptor" evidence="1">
    <location>
        <position position="129"/>
    </location>
</feature>
<feature type="binding site" evidence="1">
    <location>
        <begin position="101"/>
        <end position="106"/>
    </location>
    <ligand>
        <name>dCTP</name>
        <dbReference type="ChEBI" id="CHEBI:61481"/>
    </ligand>
</feature>
<feature type="binding site" evidence="1">
    <location>
        <position position="119"/>
    </location>
    <ligand>
        <name>dCTP</name>
        <dbReference type="ChEBI" id="CHEBI:61481"/>
    </ligand>
</feature>
<feature type="binding site" evidence="1">
    <location>
        <begin position="127"/>
        <end position="129"/>
    </location>
    <ligand>
        <name>dCTP</name>
        <dbReference type="ChEBI" id="CHEBI:61481"/>
    </ligand>
</feature>
<feature type="binding site" evidence="1">
    <location>
        <position position="148"/>
    </location>
    <ligand>
        <name>dCTP</name>
        <dbReference type="ChEBI" id="CHEBI:61481"/>
    </ligand>
</feature>
<feature type="binding site" evidence="1">
    <location>
        <position position="162"/>
    </location>
    <ligand>
        <name>dCTP</name>
        <dbReference type="ChEBI" id="CHEBI:61481"/>
    </ligand>
</feature>
<feature type="binding site" evidence="1">
    <location>
        <position position="174"/>
    </location>
    <ligand>
        <name>dCTP</name>
        <dbReference type="ChEBI" id="CHEBI:61481"/>
    </ligand>
</feature>
<feature type="site" description="Important for bifunctional activity" evidence="1">
    <location>
        <begin position="116"/>
        <end position="117"/>
    </location>
</feature>
<dbReference type="EC" id="3.5.4.30" evidence="1"/>
<dbReference type="EMBL" id="AL583925">
    <property type="protein sequence ID" value="CAC32024.1"/>
    <property type="molecule type" value="Genomic_DNA"/>
</dbReference>
<dbReference type="PIR" id="H87222">
    <property type="entry name" value="H87222"/>
</dbReference>
<dbReference type="RefSeq" id="NP_302619.1">
    <property type="nucleotide sequence ID" value="NC_002677.1"/>
</dbReference>
<dbReference type="RefSeq" id="WP_010908938.1">
    <property type="nucleotide sequence ID" value="NC_002677.1"/>
</dbReference>
<dbReference type="SMR" id="Q9CB17"/>
<dbReference type="STRING" id="272631.gene:17576371"/>
<dbReference type="KEGG" id="mle:ML2507"/>
<dbReference type="PATRIC" id="fig|272631.5.peg.4815"/>
<dbReference type="Leproma" id="ML2507"/>
<dbReference type="eggNOG" id="COG0717">
    <property type="taxonomic scope" value="Bacteria"/>
</dbReference>
<dbReference type="HOGENOM" id="CLU_087476_2_1_11"/>
<dbReference type="OrthoDB" id="9780956at2"/>
<dbReference type="UniPathway" id="UPA00610">
    <property type="reaction ID" value="UER00667"/>
</dbReference>
<dbReference type="Proteomes" id="UP000000806">
    <property type="component" value="Chromosome"/>
</dbReference>
<dbReference type="GO" id="GO:0033973">
    <property type="term" value="F:dCTP deaminase (dUMP-forming) activity"/>
    <property type="evidence" value="ECO:0007669"/>
    <property type="project" value="UniProtKB-UniRule"/>
</dbReference>
<dbReference type="GO" id="GO:0008829">
    <property type="term" value="F:dCTP deaminase activity"/>
    <property type="evidence" value="ECO:0007669"/>
    <property type="project" value="InterPro"/>
</dbReference>
<dbReference type="GO" id="GO:0000166">
    <property type="term" value="F:nucleotide binding"/>
    <property type="evidence" value="ECO:0007669"/>
    <property type="project" value="UniProtKB-KW"/>
</dbReference>
<dbReference type="GO" id="GO:0006226">
    <property type="term" value="P:dUMP biosynthetic process"/>
    <property type="evidence" value="ECO:0007669"/>
    <property type="project" value="UniProtKB-UniRule"/>
</dbReference>
<dbReference type="GO" id="GO:0006229">
    <property type="term" value="P:dUTP biosynthetic process"/>
    <property type="evidence" value="ECO:0007669"/>
    <property type="project" value="InterPro"/>
</dbReference>
<dbReference type="GO" id="GO:0015949">
    <property type="term" value="P:nucleobase-containing small molecule interconversion"/>
    <property type="evidence" value="ECO:0007669"/>
    <property type="project" value="TreeGrafter"/>
</dbReference>
<dbReference type="CDD" id="cd07557">
    <property type="entry name" value="trimeric_dUTPase"/>
    <property type="match status" value="1"/>
</dbReference>
<dbReference type="FunFam" id="2.70.40.10:FF:000005">
    <property type="entry name" value="dCTP deaminase, dUMP-forming"/>
    <property type="match status" value="1"/>
</dbReference>
<dbReference type="Gene3D" id="2.70.40.10">
    <property type="match status" value="1"/>
</dbReference>
<dbReference type="HAMAP" id="MF_00146">
    <property type="entry name" value="dCTP_deaminase"/>
    <property type="match status" value="1"/>
</dbReference>
<dbReference type="InterPro" id="IPR011962">
    <property type="entry name" value="dCTP_deaminase"/>
</dbReference>
<dbReference type="InterPro" id="IPR036157">
    <property type="entry name" value="dUTPase-like_sf"/>
</dbReference>
<dbReference type="InterPro" id="IPR033704">
    <property type="entry name" value="dUTPase_trimeric"/>
</dbReference>
<dbReference type="NCBIfam" id="TIGR02274">
    <property type="entry name" value="dCTP_deam"/>
    <property type="match status" value="1"/>
</dbReference>
<dbReference type="PANTHER" id="PTHR42680">
    <property type="entry name" value="DCTP DEAMINASE"/>
    <property type="match status" value="1"/>
</dbReference>
<dbReference type="PANTHER" id="PTHR42680:SF3">
    <property type="entry name" value="DCTP DEAMINASE"/>
    <property type="match status" value="1"/>
</dbReference>
<dbReference type="Pfam" id="PF22769">
    <property type="entry name" value="DCD"/>
    <property type="match status" value="1"/>
</dbReference>
<dbReference type="SUPFAM" id="SSF51283">
    <property type="entry name" value="dUTPase-like"/>
    <property type="match status" value="1"/>
</dbReference>
<evidence type="ECO:0000255" key="1">
    <source>
        <dbReference type="HAMAP-Rule" id="MF_00146"/>
    </source>
</evidence>
<evidence type="ECO:0000256" key="2">
    <source>
        <dbReference type="SAM" id="MobiDB-lite"/>
    </source>
</evidence>
<name>DCDB_MYCLE</name>
<sequence>MLLSDRDLRAEITAGRFSIDPFDDTLVQPSSIDVRLDCMFRVFNNTRYTHIDPARQQDELTSLVELVDGEPFVLHPGGFVLGSTLELFTLPEDLAGRLEGKSSLGRLGLLTHSTAGFIDPGFCGHITLELSNVANLPITLWPGMKIGQLCVLRLTSPAEHPYGSASAGSKYQGQRGPTPSRSYENFIKNT</sequence>
<gene>
    <name evidence="1" type="primary">dcd</name>
    <name type="ordered locus">ML2507</name>
</gene>
<proteinExistence type="inferred from homology"/>
<reference key="1">
    <citation type="journal article" date="2001" name="Nature">
        <title>Massive gene decay in the leprosy bacillus.</title>
        <authorList>
            <person name="Cole S.T."/>
            <person name="Eiglmeier K."/>
            <person name="Parkhill J."/>
            <person name="James K.D."/>
            <person name="Thomson N.R."/>
            <person name="Wheeler P.R."/>
            <person name="Honore N."/>
            <person name="Garnier T."/>
            <person name="Churcher C.M."/>
            <person name="Harris D.E."/>
            <person name="Mungall K.L."/>
            <person name="Basham D."/>
            <person name="Brown D."/>
            <person name="Chillingworth T."/>
            <person name="Connor R."/>
            <person name="Davies R.M."/>
            <person name="Devlin K."/>
            <person name="Duthoy S."/>
            <person name="Feltwell T."/>
            <person name="Fraser A."/>
            <person name="Hamlin N."/>
            <person name="Holroyd S."/>
            <person name="Hornsby T."/>
            <person name="Jagels K."/>
            <person name="Lacroix C."/>
            <person name="Maclean J."/>
            <person name="Moule S."/>
            <person name="Murphy L.D."/>
            <person name="Oliver K."/>
            <person name="Quail M.A."/>
            <person name="Rajandream M.A."/>
            <person name="Rutherford K.M."/>
            <person name="Rutter S."/>
            <person name="Seeger K."/>
            <person name="Simon S."/>
            <person name="Simmonds M."/>
            <person name="Skelton J."/>
            <person name="Squares R."/>
            <person name="Squares S."/>
            <person name="Stevens K."/>
            <person name="Taylor K."/>
            <person name="Whitehead S."/>
            <person name="Woodward J.R."/>
            <person name="Barrell B.G."/>
        </authorList>
    </citation>
    <scope>NUCLEOTIDE SEQUENCE [LARGE SCALE GENOMIC DNA]</scope>
    <source>
        <strain>TN</strain>
    </source>
</reference>
<comment type="function">
    <text evidence="1">Bifunctional enzyme that catalyzes both the deamination of dCTP to dUTP and the hydrolysis of dUTP to dUMP without releasing the toxic dUTP intermediate.</text>
</comment>
<comment type="catalytic activity">
    <reaction evidence="1">
        <text>dCTP + 2 H2O = dUMP + NH4(+) + diphosphate</text>
        <dbReference type="Rhea" id="RHEA:19205"/>
        <dbReference type="ChEBI" id="CHEBI:15377"/>
        <dbReference type="ChEBI" id="CHEBI:28938"/>
        <dbReference type="ChEBI" id="CHEBI:33019"/>
        <dbReference type="ChEBI" id="CHEBI:61481"/>
        <dbReference type="ChEBI" id="CHEBI:246422"/>
        <dbReference type="EC" id="3.5.4.30"/>
    </reaction>
</comment>
<comment type="pathway">
    <text evidence="1">Pyrimidine metabolism; dUMP biosynthesis; dUMP from dCTP: step 1/1.</text>
</comment>
<comment type="subunit">
    <text evidence="1">Homotrimer.</text>
</comment>
<comment type="similarity">
    <text evidence="1">Belongs to the dCTP deaminase family.</text>
</comment>
<accession>Q9CB17</accession>
<organism>
    <name type="scientific">Mycobacterium leprae (strain TN)</name>
    <dbReference type="NCBI Taxonomy" id="272631"/>
    <lineage>
        <taxon>Bacteria</taxon>
        <taxon>Bacillati</taxon>
        <taxon>Actinomycetota</taxon>
        <taxon>Actinomycetes</taxon>
        <taxon>Mycobacteriales</taxon>
        <taxon>Mycobacteriaceae</taxon>
        <taxon>Mycobacterium</taxon>
    </lineage>
</organism>
<keyword id="KW-0378">Hydrolase</keyword>
<keyword id="KW-0546">Nucleotide metabolism</keyword>
<keyword id="KW-0547">Nucleotide-binding</keyword>
<keyword id="KW-1185">Reference proteome</keyword>